<keyword id="KW-0165">Cleavage on pair of basic residues</keyword>
<keyword id="KW-0175">Coiled coil</keyword>
<keyword id="KW-1015">Disulfide bond</keyword>
<keyword id="KW-1169">Fusion of virus membrane with host cell membrane</keyword>
<keyword id="KW-1168">Fusion of virus membrane with host membrane</keyword>
<keyword id="KW-0325">Glycoprotein</keyword>
<keyword id="KW-1032">Host cell membrane</keyword>
<keyword id="KW-1043">Host membrane</keyword>
<keyword id="KW-0945">Host-virus interaction</keyword>
<keyword id="KW-0449">Lipoprotein</keyword>
<keyword id="KW-0472">Membrane</keyword>
<keyword id="KW-0564">Palmitate</keyword>
<keyword id="KW-0732">Signal</keyword>
<keyword id="KW-0812">Transmembrane</keyword>
<keyword id="KW-1133">Transmembrane helix</keyword>
<keyword id="KW-1161">Viral attachment to host cell</keyword>
<keyword id="KW-0261">Viral envelope protein</keyword>
<keyword id="KW-1162">Viral penetration into host cytoplasm</keyword>
<keyword id="KW-0946">Virion</keyword>
<keyword id="KW-1160">Virus entry into host cell</keyword>
<organism>
    <name type="scientific">Human T-cell leukemia virus 3 (strain Pyl43)</name>
    <name type="common">HTLV-3</name>
    <dbReference type="NCBI Taxonomy" id="406769"/>
    <lineage>
        <taxon>Viruses</taxon>
        <taxon>Riboviria</taxon>
        <taxon>Pararnavirae</taxon>
        <taxon>Artverviricota</taxon>
        <taxon>Revtraviricetes</taxon>
        <taxon>Ortervirales</taxon>
        <taxon>Retroviridae</taxon>
        <taxon>Orthoretrovirinae</taxon>
        <taxon>Deltaretrovirus</taxon>
        <taxon>Primate T-lymphotropic virus 3</taxon>
    </lineage>
</organism>
<feature type="signal peptide" evidence="2">
    <location>
        <begin position="1"/>
        <end position="22"/>
    </location>
</feature>
<feature type="chain" id="PRO_0000260466" description="Envelope glycoprotein gp63" evidence="1">
    <location>
        <begin position="23"/>
        <end position="493"/>
    </location>
</feature>
<feature type="chain" id="PRO_0000260467" description="Surface protein" evidence="1">
    <location>
        <begin position="23"/>
        <end position="315"/>
    </location>
</feature>
<feature type="chain" id="PRO_0000260468" description="Transmembrane protein" evidence="1">
    <location>
        <begin position="316"/>
        <end position="493"/>
    </location>
</feature>
<feature type="topological domain" description="Extracellular" evidence="2">
    <location>
        <begin position="23"/>
        <end position="446"/>
    </location>
</feature>
<feature type="transmembrane region" description="Helical" evidence="2">
    <location>
        <begin position="447"/>
        <end position="467"/>
    </location>
</feature>
<feature type="topological domain" description="Cytoplasmic" evidence="2">
    <location>
        <begin position="468"/>
        <end position="493"/>
    </location>
</feature>
<feature type="region of interest" description="Fusion peptide" evidence="2">
    <location>
        <begin position="316"/>
        <end position="336"/>
    </location>
</feature>
<feature type="region of interest" description="Immunosuppression" evidence="1">
    <location>
        <begin position="379"/>
        <end position="395"/>
    </location>
</feature>
<feature type="coiled-coil region" evidence="2">
    <location>
        <begin position="344"/>
        <end position="390"/>
    </location>
</feature>
<feature type="coiled-coil region" evidence="2">
    <location>
        <begin position="400"/>
        <end position="432"/>
    </location>
</feature>
<feature type="short sequence motif" description="CXXC" evidence="1">
    <location>
        <begin position="225"/>
        <end position="228"/>
    </location>
</feature>
<feature type="short sequence motif" description="CX6CC" evidence="1">
    <location>
        <begin position="396"/>
        <end position="404"/>
    </location>
</feature>
<feature type="site" description="Cleavage; by host furin" evidence="1">
    <location>
        <begin position="315"/>
        <end position="316"/>
    </location>
</feature>
<feature type="lipid moiety-binding region" description="S-palmitoyl cysteine; by host" evidence="1">
    <location>
        <position position="465"/>
    </location>
</feature>
<feature type="glycosylation site" description="N-linked (GlcNAc...) asparagine; by host" evidence="2">
    <location>
        <position position="140"/>
    </location>
</feature>
<feature type="glycosylation site" description="N-linked (GlcNAc...) asparagine; by host" evidence="2">
    <location>
        <position position="222"/>
    </location>
</feature>
<feature type="glycosylation site" description="N-linked (GlcNAc...) asparagine; by host" evidence="2">
    <location>
        <position position="292"/>
    </location>
</feature>
<feature type="glycosylation site" description="N-linked (GlcNAc...) asparagine; by host" evidence="2">
    <location>
        <position position="407"/>
    </location>
</feature>
<feature type="disulfide bond" description="Interchain (between SU and TM chains, or C-228 with C-404); in linked form" evidence="1">
    <location>
        <begin position="225"/>
        <end position="404"/>
    </location>
</feature>
<feature type="disulfide bond" evidence="1">
    <location>
        <begin position="225"/>
        <end position="228"/>
    </location>
</feature>
<feature type="disulfide bond" evidence="1">
    <location>
        <begin position="396"/>
        <end position="403"/>
    </location>
</feature>
<organismHost>
    <name type="scientific">Homo sapiens</name>
    <name type="common">Human</name>
    <dbReference type="NCBI Taxonomy" id="9606"/>
</organismHost>
<name>ENV_HTL3P</name>
<accession>Q09SZ7</accession>
<sequence length="493" mass="54775">MGKSGLYFSLICFYTLFPSSFGNPSRCTLFIGASSYHSDPCGSNHPRCTWRLDLFSLTKDQSLSPPCPGLVTYSQYHKPYSLYVFPHWIAKPDRRGLGYYSASYSDPCAIQCPYLGCQSWTCPYTGPVSNPHWKYTSDLNFTQEVSSISLHLHFSKCGSSFSFLLDAPGYDPVWLLSSQATQIPPTPAPLIQDSDLQHILEPSIPWSSKILNLILLALKSTNYSCMVCVDRSSLSSWHVLYDPLKAPSSPDPQAQSILRPSLAIPASNITPPFPWTHCYRPPLQAISSENCNNSVILPPFSLSPIPDVSRPRKRRAVPIAIWLVSALAAGTGIAGGVTGSLSLASSKSLLREVDQDIDHLTRAIVKNHDNILRVAQYAAQNRRGLDLLFWEQGGLCKAIQEQCCFLNISNTHVSVLQERPPLEKRVITGWGLNWDLGLSQWAREALQTGITLLALFLLLIVVGPCVIRQLQTLPSRLQHRSQPYSLLNYETNL</sequence>
<dbReference type="EMBL" id="DQ462191">
    <property type="protein sequence ID" value="ABF18961.1"/>
    <property type="molecule type" value="Genomic_DNA"/>
</dbReference>
<dbReference type="SMR" id="Q09SZ7"/>
<dbReference type="IntAct" id="Q09SZ7">
    <property type="interactions" value="1"/>
</dbReference>
<dbReference type="MINT" id="Q09SZ7"/>
<dbReference type="GlyCosmos" id="Q09SZ7">
    <property type="glycosylation" value="4 sites, No reported glycans"/>
</dbReference>
<dbReference type="Proteomes" id="UP000007684">
    <property type="component" value="Genome"/>
</dbReference>
<dbReference type="GO" id="GO:0020002">
    <property type="term" value="C:host cell plasma membrane"/>
    <property type="evidence" value="ECO:0007669"/>
    <property type="project" value="UniProtKB-SubCell"/>
</dbReference>
<dbReference type="GO" id="GO:0016020">
    <property type="term" value="C:membrane"/>
    <property type="evidence" value="ECO:0007669"/>
    <property type="project" value="UniProtKB-KW"/>
</dbReference>
<dbReference type="GO" id="GO:0019031">
    <property type="term" value="C:viral envelope"/>
    <property type="evidence" value="ECO:0007669"/>
    <property type="project" value="UniProtKB-KW"/>
</dbReference>
<dbReference type="GO" id="GO:0055036">
    <property type="term" value="C:virion membrane"/>
    <property type="evidence" value="ECO:0007669"/>
    <property type="project" value="UniProtKB-SubCell"/>
</dbReference>
<dbReference type="GO" id="GO:0019064">
    <property type="term" value="P:fusion of virus membrane with host plasma membrane"/>
    <property type="evidence" value="ECO:0007669"/>
    <property type="project" value="UniProtKB-KW"/>
</dbReference>
<dbReference type="GO" id="GO:0046718">
    <property type="term" value="P:symbiont entry into host cell"/>
    <property type="evidence" value="ECO:0007669"/>
    <property type="project" value="UniProtKB-KW"/>
</dbReference>
<dbReference type="GO" id="GO:0019062">
    <property type="term" value="P:virion attachment to host cell"/>
    <property type="evidence" value="ECO:0007669"/>
    <property type="project" value="UniProtKB-KW"/>
</dbReference>
<dbReference type="CDD" id="cd09851">
    <property type="entry name" value="HTLV-1-like_HR1-HR2"/>
    <property type="match status" value="1"/>
</dbReference>
<dbReference type="Gene3D" id="1.10.287.210">
    <property type="match status" value="1"/>
</dbReference>
<dbReference type="InterPro" id="IPR018154">
    <property type="entry name" value="TLV/ENV_coat_polyprotein"/>
</dbReference>
<dbReference type="PANTHER" id="PTHR10424:SF81">
    <property type="entry name" value="ERVV2 PROTEIN"/>
    <property type="match status" value="1"/>
</dbReference>
<dbReference type="PANTHER" id="PTHR10424">
    <property type="entry name" value="VIRAL ENVELOPE PROTEIN"/>
    <property type="match status" value="1"/>
</dbReference>
<dbReference type="Pfam" id="PF00429">
    <property type="entry name" value="TLV_coat"/>
    <property type="match status" value="2"/>
</dbReference>
<dbReference type="SUPFAM" id="SSF58069">
    <property type="entry name" value="Virus ectodomain"/>
    <property type="match status" value="1"/>
</dbReference>
<proteinExistence type="inferred from homology"/>
<gene>
    <name type="primary">env</name>
</gene>
<protein>
    <recommendedName>
        <fullName>Envelope glycoprotein gp63</fullName>
    </recommendedName>
    <alternativeName>
        <fullName>Env polyprotein</fullName>
    </alternativeName>
    <component>
        <recommendedName>
            <fullName>Surface protein</fullName>
            <shortName>SU</shortName>
        </recommendedName>
        <alternativeName>
            <fullName>Glycoprotein 46</fullName>
            <shortName>gp46</shortName>
        </alternativeName>
    </component>
    <component>
        <recommendedName>
            <fullName>Transmembrane protein</fullName>
            <shortName>TM</shortName>
        </recommendedName>
        <alternativeName>
            <fullName>Glycoprotein 21</fullName>
            <shortName>gp21</shortName>
        </alternativeName>
    </component>
</protein>
<evidence type="ECO:0000250" key="1"/>
<evidence type="ECO:0000255" key="2"/>
<reference key="1">
    <citation type="journal article" date="2006" name="J. Virol.">
        <title>Human T-cell lymphotropic virus type 3: complete nucleotide sequence and characterization of the human tax3 protein.</title>
        <authorList>
            <person name="Calattini S."/>
            <person name="Chevalier S.A."/>
            <person name="Duprez R."/>
            <person name="Afonso P."/>
            <person name="Froment A."/>
            <person name="Gessain A."/>
            <person name="Mahieux R."/>
        </authorList>
    </citation>
    <scope>NUCLEOTIDE SEQUENCE [GENOMIC DNA]</scope>
</reference>
<comment type="function">
    <text evidence="1">The surface protein (SU) attaches the virus to the host cell by binding to its receptor. This interaction triggers the refolding of the transmembrane protein (TM) and is thought to activate its fusogenic potential by unmasking its fusion peptide. Fusion occurs at the host cell plasma membrane (By similarity).</text>
</comment>
<comment type="function">
    <text evidence="1">The transmembrane protein (TM) acts as a class I viral fusion protein. Under the current model, the protein has at least 3 conformational states: pre-fusion native state, pre-hairpin intermediate state, and post-fusion hairpin state. During viral and target cell membrane fusion, the coiled coil regions (heptad repeats) assume a trimer-of-hairpins structure, positioning the fusion peptide in close proximity to the C-terminal region of the ectodomain. The formation of this structure appears to drive apposition and subsequent fusion of viral and target cell membranes. Membranes fusion leads to delivery of the nucleocapsid into the cytoplasm (By similarity).</text>
</comment>
<comment type="subunit">
    <text evidence="1">The mature envelope protein (Env) consists of a trimer of SU-TM heterodimers attached by a labile interchain disulfide bond.</text>
</comment>
<comment type="subcellular location">
    <molecule>Transmembrane protein</molecule>
    <subcellularLocation>
        <location evidence="1">Virion membrane</location>
        <topology evidence="1">Single-pass type I membrane protein</topology>
    </subcellularLocation>
    <subcellularLocation>
        <location evidence="1">Host cell membrane</location>
        <topology evidence="1">Single-pass type I membrane protein</topology>
    </subcellularLocation>
    <text evidence="1">It is probably concentrated at the site of budding and incorporated into the virions possibly by contacts between the cytoplasmic tail of Env and the N-terminus of Gag.</text>
</comment>
<comment type="subcellular location">
    <molecule>Surface protein</molecule>
    <subcellularLocation>
        <location evidence="1">Virion membrane</location>
        <topology evidence="1">Peripheral membrane protein</topology>
    </subcellularLocation>
    <subcellularLocation>
        <location evidence="1">Host cell membrane</location>
        <topology evidence="1">Peripheral membrane protein</topology>
    </subcellularLocation>
    <text evidence="1">The surface protein is not anchored to the viral envelope, but associates with the extravirion surface through its binding to TM. It is probably concentrated at the site of budding and incorporated into the virions possibly by contacts between the cytoplasmic tail of Env and the N-terminus of Gag (By similarity).</text>
</comment>
<comment type="domain">
    <text evidence="1">The 17 amino acids long immunosuppressive region is present in many retroviral envelope proteins. Synthetic peptides derived from this relatively conserved sequence inhibit immune function in vitro and in vivo (By similarity).</text>
</comment>
<comment type="PTM">
    <text evidence="1">Specific enzymatic cleavages in vivo yield mature proteins. Envelope glycoproteins are synthesized as an inactive precursor that is N-glycosylated and processed likely by host cell furin or by a furin-like protease in the Golgi to yield the mature SU and TM proteins. The cleavage site between SU and TM requires the minimal sequence [KR]-X-[KR]-R (By similarity).</text>
</comment>
<comment type="PTM">
    <text evidence="1">The CXXC motif is highly conserved across a broad range of retroviral envelope proteins. It is thought to participate in the formation of a labile disulfide bond possibly with the CX6CC motif present in the transmembrane protein. Isomerization of the intersubunit disulfide bond to an SU intrachain disulfide bond is thought to occur upon receptor recognition in order to allow membrane fusion (By similarity).</text>
</comment>
<comment type="PTM">
    <text evidence="1">The transmembrane protein is palmitoylated.</text>
</comment>